<protein>
    <recommendedName>
        <fullName evidence="1">Tyrosine--tRNA ligase</fullName>
        <ecNumber evidence="1">6.1.1.1</ecNumber>
    </recommendedName>
    <alternativeName>
        <fullName evidence="1">Tyrosyl-tRNA synthetase</fullName>
        <shortName evidence="1">TyrRS</shortName>
    </alternativeName>
</protein>
<accession>A2SU89</accession>
<gene>
    <name evidence="1" type="primary">tyrS</name>
    <name type="ordered locus">Mlab_1734</name>
</gene>
<keyword id="KW-0030">Aminoacyl-tRNA synthetase</keyword>
<keyword id="KW-0067">ATP-binding</keyword>
<keyword id="KW-0963">Cytoplasm</keyword>
<keyword id="KW-0436">Ligase</keyword>
<keyword id="KW-0547">Nucleotide-binding</keyword>
<keyword id="KW-0648">Protein biosynthesis</keyword>
<keyword id="KW-1185">Reference proteome</keyword>
<sequence>MDAYELVTRNTAEIVTEDELRALLNKPTKRVYTGYEPSGEIHLGHLVTINKLMDMKAAGFDVVVLIANLHAYLNRKGTFEQIKELADYNKACIEAVGLKGAEFVLGTDVQLTPKYQTEVLTLCQQITLNRATRSMDEVGRAMDNPMVSQMVYPVMQVVDIPTLNVDAAVGGIDQRKIHMLAREHLPTLGYKPPVCIHTPIVNGLDGEKMSSSKGNVVSVADSPEEIKKKMKKAFCPPETEGNPILQIFRYNVFPRMDTIAIRRPEKFGGDLEFHSYAELEAAYAGGKIHPMDLKAACGDALTELLADAYAYVQSYKN</sequence>
<proteinExistence type="inferred from homology"/>
<organism>
    <name type="scientific">Methanocorpusculum labreanum (strain ATCC 43576 / DSM 4855 / Z)</name>
    <dbReference type="NCBI Taxonomy" id="410358"/>
    <lineage>
        <taxon>Archaea</taxon>
        <taxon>Methanobacteriati</taxon>
        <taxon>Methanobacteriota</taxon>
        <taxon>Stenosarchaea group</taxon>
        <taxon>Methanomicrobia</taxon>
        <taxon>Methanomicrobiales</taxon>
        <taxon>Methanocorpusculaceae</taxon>
        <taxon>Methanocorpusculum</taxon>
    </lineage>
</organism>
<comment type="function">
    <text evidence="1">Catalyzes the attachment of tyrosine to tRNA(Tyr) in a two-step reaction: tyrosine is first activated by ATP to form Tyr-AMP and then transferred to the acceptor end of tRNA(Tyr).</text>
</comment>
<comment type="catalytic activity">
    <reaction evidence="1">
        <text>tRNA(Tyr) + L-tyrosine + ATP = L-tyrosyl-tRNA(Tyr) + AMP + diphosphate + H(+)</text>
        <dbReference type="Rhea" id="RHEA:10220"/>
        <dbReference type="Rhea" id="RHEA-COMP:9706"/>
        <dbReference type="Rhea" id="RHEA-COMP:9707"/>
        <dbReference type="ChEBI" id="CHEBI:15378"/>
        <dbReference type="ChEBI" id="CHEBI:30616"/>
        <dbReference type="ChEBI" id="CHEBI:33019"/>
        <dbReference type="ChEBI" id="CHEBI:58315"/>
        <dbReference type="ChEBI" id="CHEBI:78442"/>
        <dbReference type="ChEBI" id="CHEBI:78536"/>
        <dbReference type="ChEBI" id="CHEBI:456215"/>
        <dbReference type="EC" id="6.1.1.1"/>
    </reaction>
</comment>
<comment type="subunit">
    <text evidence="1">Homodimer.</text>
</comment>
<comment type="subcellular location">
    <subcellularLocation>
        <location evidence="1">Cytoplasm</location>
    </subcellularLocation>
</comment>
<comment type="similarity">
    <text evidence="1">Belongs to the class-I aminoacyl-tRNA synthetase family. TyrS type 3 subfamily.</text>
</comment>
<reference key="1">
    <citation type="journal article" date="2009" name="Stand. Genomic Sci.">
        <title>Complete genome sequence of Methanocorpusculum labreanum type strain Z.</title>
        <authorList>
            <person name="Anderson I.J."/>
            <person name="Sieprawska-Lupa M."/>
            <person name="Goltsman E."/>
            <person name="Lapidus A."/>
            <person name="Copeland A."/>
            <person name="Glavina Del Rio T."/>
            <person name="Tice H."/>
            <person name="Dalin E."/>
            <person name="Barry K."/>
            <person name="Pitluck S."/>
            <person name="Hauser L."/>
            <person name="Land M."/>
            <person name="Lucas S."/>
            <person name="Richardson P."/>
            <person name="Whitman W.B."/>
            <person name="Kyrpides N.C."/>
        </authorList>
    </citation>
    <scope>NUCLEOTIDE SEQUENCE [LARGE SCALE GENOMIC DNA]</scope>
    <source>
        <strain>ATCC 43576 / DSM 4855 / Z</strain>
    </source>
</reference>
<dbReference type="EC" id="6.1.1.1" evidence="1"/>
<dbReference type="EMBL" id="CP000559">
    <property type="protein sequence ID" value="ABN07895.1"/>
    <property type="molecule type" value="Genomic_DNA"/>
</dbReference>
<dbReference type="RefSeq" id="WP_011834098.1">
    <property type="nucleotide sequence ID" value="NC_008942.1"/>
</dbReference>
<dbReference type="SMR" id="A2SU89"/>
<dbReference type="STRING" id="410358.Mlab_1734"/>
<dbReference type="GeneID" id="4794385"/>
<dbReference type="KEGG" id="mla:Mlab_1734"/>
<dbReference type="eggNOG" id="arCOG01886">
    <property type="taxonomic scope" value="Archaea"/>
</dbReference>
<dbReference type="HOGENOM" id="CLU_035267_0_1_2"/>
<dbReference type="OrthoDB" id="8389at2157"/>
<dbReference type="Proteomes" id="UP000000365">
    <property type="component" value="Chromosome"/>
</dbReference>
<dbReference type="GO" id="GO:0005737">
    <property type="term" value="C:cytoplasm"/>
    <property type="evidence" value="ECO:0007669"/>
    <property type="project" value="UniProtKB-SubCell"/>
</dbReference>
<dbReference type="GO" id="GO:0005524">
    <property type="term" value="F:ATP binding"/>
    <property type="evidence" value="ECO:0007669"/>
    <property type="project" value="UniProtKB-UniRule"/>
</dbReference>
<dbReference type="GO" id="GO:0004831">
    <property type="term" value="F:tyrosine-tRNA ligase activity"/>
    <property type="evidence" value="ECO:0007669"/>
    <property type="project" value="UniProtKB-UniRule"/>
</dbReference>
<dbReference type="GO" id="GO:0006437">
    <property type="term" value="P:tyrosyl-tRNA aminoacylation"/>
    <property type="evidence" value="ECO:0007669"/>
    <property type="project" value="UniProtKB-UniRule"/>
</dbReference>
<dbReference type="Gene3D" id="3.40.50.620">
    <property type="entry name" value="HUPs"/>
    <property type="match status" value="1"/>
</dbReference>
<dbReference type="Gene3D" id="1.10.240.10">
    <property type="entry name" value="Tyrosyl-Transfer RNA Synthetase"/>
    <property type="match status" value="1"/>
</dbReference>
<dbReference type="HAMAP" id="MF_02008">
    <property type="entry name" value="Tyr_tRNA_synth_type3"/>
    <property type="match status" value="1"/>
</dbReference>
<dbReference type="InterPro" id="IPR001412">
    <property type="entry name" value="aa-tRNA-synth_I_CS"/>
</dbReference>
<dbReference type="InterPro" id="IPR002305">
    <property type="entry name" value="aa-tRNA-synth_Ic"/>
</dbReference>
<dbReference type="InterPro" id="IPR014729">
    <property type="entry name" value="Rossmann-like_a/b/a_fold"/>
</dbReference>
<dbReference type="InterPro" id="IPR002307">
    <property type="entry name" value="Tyr-tRNA-ligase"/>
</dbReference>
<dbReference type="InterPro" id="IPR023684">
    <property type="entry name" value="Tyr-tRNA-ligase_3"/>
</dbReference>
<dbReference type="InterPro" id="IPR023617">
    <property type="entry name" value="Tyr-tRNA-ligase_arc/euk-type"/>
</dbReference>
<dbReference type="InterPro" id="IPR050489">
    <property type="entry name" value="Tyr-tRNA_synthase"/>
</dbReference>
<dbReference type="NCBIfam" id="NF006330">
    <property type="entry name" value="PRK08560.1"/>
    <property type="match status" value="1"/>
</dbReference>
<dbReference type="NCBIfam" id="TIGR00234">
    <property type="entry name" value="tyrS"/>
    <property type="match status" value="1"/>
</dbReference>
<dbReference type="PANTHER" id="PTHR46264:SF4">
    <property type="entry name" value="TYROSINE--TRNA LIGASE, CYTOPLASMIC"/>
    <property type="match status" value="1"/>
</dbReference>
<dbReference type="PANTHER" id="PTHR46264">
    <property type="entry name" value="TYROSINE-TRNA LIGASE"/>
    <property type="match status" value="1"/>
</dbReference>
<dbReference type="Pfam" id="PF00579">
    <property type="entry name" value="tRNA-synt_1b"/>
    <property type="match status" value="1"/>
</dbReference>
<dbReference type="PIRSF" id="PIRSF006588">
    <property type="entry name" value="TyrRS_arch_euk"/>
    <property type="match status" value="1"/>
</dbReference>
<dbReference type="PRINTS" id="PR01040">
    <property type="entry name" value="TRNASYNTHTYR"/>
</dbReference>
<dbReference type="SUPFAM" id="SSF52374">
    <property type="entry name" value="Nucleotidylyl transferase"/>
    <property type="match status" value="1"/>
</dbReference>
<dbReference type="PROSITE" id="PS00178">
    <property type="entry name" value="AA_TRNA_LIGASE_I"/>
    <property type="match status" value="1"/>
</dbReference>
<feature type="chain" id="PRO_0000303677" description="Tyrosine--tRNA ligase">
    <location>
        <begin position="1"/>
        <end position="317"/>
    </location>
</feature>
<feature type="short sequence motif" description="'HIGH' region">
    <location>
        <begin position="37"/>
        <end position="45"/>
    </location>
</feature>
<feature type="short sequence motif" description="'KMSKS' region">
    <location>
        <begin position="208"/>
        <end position="212"/>
    </location>
</feature>
<feature type="binding site" evidence="1">
    <location>
        <position position="32"/>
    </location>
    <ligand>
        <name>L-tyrosine</name>
        <dbReference type="ChEBI" id="CHEBI:58315"/>
    </ligand>
</feature>
<feature type="binding site" evidence="1">
    <location>
        <position position="152"/>
    </location>
    <ligand>
        <name>L-tyrosine</name>
        <dbReference type="ChEBI" id="CHEBI:58315"/>
    </ligand>
</feature>
<feature type="binding site" evidence="1">
    <location>
        <position position="156"/>
    </location>
    <ligand>
        <name>L-tyrosine</name>
        <dbReference type="ChEBI" id="CHEBI:58315"/>
    </ligand>
</feature>
<feature type="binding site" evidence="1">
    <location>
        <position position="159"/>
    </location>
    <ligand>
        <name>L-tyrosine</name>
        <dbReference type="ChEBI" id="CHEBI:58315"/>
    </ligand>
</feature>
<feature type="binding site" evidence="1">
    <location>
        <position position="174"/>
    </location>
    <ligand>
        <name>L-tyrosine</name>
        <dbReference type="ChEBI" id="CHEBI:58315"/>
    </ligand>
</feature>
<feature type="binding site" evidence="1">
    <location>
        <position position="211"/>
    </location>
    <ligand>
        <name>ATP</name>
        <dbReference type="ChEBI" id="CHEBI:30616"/>
    </ligand>
</feature>
<name>SYY_METLZ</name>
<evidence type="ECO:0000255" key="1">
    <source>
        <dbReference type="HAMAP-Rule" id="MF_02008"/>
    </source>
</evidence>